<organism>
    <name type="scientific">Phaeosphaeria nodorum (strain SN15 / ATCC MYA-4574 / FGSC 10173)</name>
    <name type="common">Glume blotch fungus</name>
    <name type="synonym">Parastagonospora nodorum</name>
    <dbReference type="NCBI Taxonomy" id="321614"/>
    <lineage>
        <taxon>Eukaryota</taxon>
        <taxon>Fungi</taxon>
        <taxon>Dikarya</taxon>
        <taxon>Ascomycota</taxon>
        <taxon>Pezizomycotina</taxon>
        <taxon>Dothideomycetes</taxon>
        <taxon>Pleosporomycetidae</taxon>
        <taxon>Pleosporales</taxon>
        <taxon>Pleosporineae</taxon>
        <taxon>Phaeosphaeriaceae</taxon>
        <taxon>Parastagonospora</taxon>
    </lineage>
</organism>
<keyword id="KW-0106">Calcium</keyword>
<keyword id="KW-0255">Endonuclease</keyword>
<keyword id="KW-0378">Hydrolase</keyword>
<keyword id="KW-0472">Membrane</keyword>
<keyword id="KW-0479">Metal-binding</keyword>
<keyword id="KW-0496">Mitochondrion</keyword>
<keyword id="KW-0540">Nuclease</keyword>
<keyword id="KW-0812">Transmembrane</keyword>
<keyword id="KW-1133">Transmembrane helix</keyword>
<evidence type="ECO:0000250" key="1"/>
<evidence type="ECO:0000255" key="2"/>
<evidence type="ECO:0000255" key="3">
    <source>
        <dbReference type="PROSITE-ProRule" id="PRU00272"/>
    </source>
</evidence>
<evidence type="ECO:0000256" key="4">
    <source>
        <dbReference type="SAM" id="MobiDB-lite"/>
    </source>
</evidence>
<evidence type="ECO:0000305" key="5"/>
<protein>
    <recommendedName>
        <fullName>Probable endonuclease LCL3</fullName>
        <ecNumber>3.1.-.-</ecNumber>
    </recommendedName>
</protein>
<sequence>MRWFGSGDDEKKKKQVGETWADSLRADSWGQSLTNPRTLIPTFAFTITTVTALRLYKTFLRRIPTVNHVKPHYFRRKGIFGKVTTVGDADNFRLYHTPGGRIAGWGWLPWKMVPTKREGLSNQTVGLPCHLGLLSIVSDSPSLVANNFQLHIRLAGVDAPELAHWGREEQPYAKEAQEWLINLIHNRRVRAYIYRRDQYDRIVAQVYVRRWLFRKDVGLEMLKAGLATIYEAKSGAEFGTSEAKYRAAEEKAKAQKVGMWAKPTLLQKLGGASTKAPESPREYKARHAAADKLKKT</sequence>
<accession>Q0UVH1</accession>
<proteinExistence type="inferred from homology"/>
<name>LCL3_PHANO</name>
<comment type="subcellular location">
    <subcellularLocation>
        <location>Mitochondrion</location>
    </subcellularLocation>
    <subcellularLocation>
        <location evidence="1">Membrane</location>
        <topology evidence="1">Single-pass membrane protein</topology>
    </subcellularLocation>
</comment>
<comment type="similarity">
    <text evidence="5">Belongs to the LCL3 family.</text>
</comment>
<feature type="chain" id="PRO_0000408675" description="Probable endonuclease LCL3">
    <location>
        <begin position="1"/>
        <end position="296"/>
    </location>
</feature>
<feature type="transmembrane region" description="Helical" evidence="2">
    <location>
        <begin position="38"/>
        <end position="56"/>
    </location>
</feature>
<feature type="domain" description="TNase-like" evidence="3">
    <location>
        <begin position="77"/>
        <end position="262"/>
    </location>
</feature>
<feature type="region of interest" description="Disordered" evidence="4">
    <location>
        <begin position="270"/>
        <end position="296"/>
    </location>
</feature>
<feature type="compositionally biased region" description="Basic and acidic residues" evidence="4">
    <location>
        <begin position="278"/>
        <end position="296"/>
    </location>
</feature>
<feature type="active site" evidence="3">
    <location>
        <position position="153"/>
    </location>
</feature>
<feature type="active site" evidence="3">
    <location>
        <position position="161"/>
    </location>
</feature>
<feature type="active site" evidence="3">
    <location>
        <position position="201"/>
    </location>
</feature>
<feature type="binding site" evidence="3">
    <location>
        <position position="158"/>
    </location>
    <ligand>
        <name>Ca(2+)</name>
        <dbReference type="ChEBI" id="CHEBI:29108"/>
    </ligand>
</feature>
<gene>
    <name type="primary">LCL3</name>
    <name type="ORF">SNOG_04243</name>
</gene>
<dbReference type="EC" id="3.1.-.-"/>
<dbReference type="EMBL" id="CH445330">
    <property type="protein sequence ID" value="EAT88003.2"/>
    <property type="molecule type" value="Genomic_DNA"/>
</dbReference>
<dbReference type="RefSeq" id="XP_001794663.1">
    <property type="nucleotide sequence ID" value="XM_001794611.1"/>
</dbReference>
<dbReference type="SMR" id="Q0UVH1"/>
<dbReference type="FunCoup" id="Q0UVH1">
    <property type="interactions" value="12"/>
</dbReference>
<dbReference type="EnsemblFungi" id="SNOT_04243">
    <property type="protein sequence ID" value="SNOT_04243"/>
    <property type="gene ID" value="SNOG_04243"/>
</dbReference>
<dbReference type="GeneID" id="5971531"/>
<dbReference type="KEGG" id="pno:SNOG_04243"/>
<dbReference type="VEuPathDB" id="FungiDB:JI435_042430"/>
<dbReference type="eggNOG" id="ENOG502RZZQ">
    <property type="taxonomic scope" value="Eukaryota"/>
</dbReference>
<dbReference type="HOGENOM" id="CLU_046484_0_1_1"/>
<dbReference type="InParanoid" id="Q0UVH1"/>
<dbReference type="Proteomes" id="UP000001055">
    <property type="component" value="Unassembled WGS sequence"/>
</dbReference>
<dbReference type="GO" id="GO:0016020">
    <property type="term" value="C:membrane"/>
    <property type="evidence" value="ECO:0007669"/>
    <property type="project" value="UniProtKB-SubCell"/>
</dbReference>
<dbReference type="GO" id="GO:0005739">
    <property type="term" value="C:mitochondrion"/>
    <property type="evidence" value="ECO:0007669"/>
    <property type="project" value="UniProtKB-SubCell"/>
</dbReference>
<dbReference type="GO" id="GO:0004519">
    <property type="term" value="F:endonuclease activity"/>
    <property type="evidence" value="ECO:0007669"/>
    <property type="project" value="UniProtKB-KW"/>
</dbReference>
<dbReference type="GO" id="GO:0046872">
    <property type="term" value="F:metal ion binding"/>
    <property type="evidence" value="ECO:0007669"/>
    <property type="project" value="UniProtKB-KW"/>
</dbReference>
<dbReference type="Gene3D" id="2.40.50.90">
    <property type="match status" value="1"/>
</dbReference>
<dbReference type="InterPro" id="IPR035437">
    <property type="entry name" value="SNase_OB-fold_sf"/>
</dbReference>
<dbReference type="InterPro" id="IPR016071">
    <property type="entry name" value="Staphylococal_nuclease_OB-fold"/>
</dbReference>
<dbReference type="PANTHER" id="PTHR12302">
    <property type="entry name" value="EBNA2 BINDING PROTEIN P100"/>
    <property type="match status" value="1"/>
</dbReference>
<dbReference type="PANTHER" id="PTHR12302:SF3">
    <property type="entry name" value="SERINE_THREONINE-PROTEIN KINASE 31"/>
    <property type="match status" value="1"/>
</dbReference>
<dbReference type="Pfam" id="PF00565">
    <property type="entry name" value="SNase"/>
    <property type="match status" value="1"/>
</dbReference>
<dbReference type="SMART" id="SM00318">
    <property type="entry name" value="SNc"/>
    <property type="match status" value="1"/>
</dbReference>
<dbReference type="SUPFAM" id="SSF50199">
    <property type="entry name" value="Staphylococcal nuclease"/>
    <property type="match status" value="1"/>
</dbReference>
<dbReference type="PROSITE" id="PS50830">
    <property type="entry name" value="TNASE_3"/>
    <property type="match status" value="1"/>
</dbReference>
<reference key="1">
    <citation type="journal article" date="2007" name="Plant Cell">
        <title>Dothideomycete-plant interactions illuminated by genome sequencing and EST analysis of the wheat pathogen Stagonospora nodorum.</title>
        <authorList>
            <person name="Hane J.K."/>
            <person name="Lowe R.G.T."/>
            <person name="Solomon P.S."/>
            <person name="Tan K.-C."/>
            <person name="Schoch C.L."/>
            <person name="Spatafora J.W."/>
            <person name="Crous P.W."/>
            <person name="Kodira C.D."/>
            <person name="Birren B.W."/>
            <person name="Galagan J.E."/>
            <person name="Torriani S.F.F."/>
            <person name="McDonald B.A."/>
            <person name="Oliver R.P."/>
        </authorList>
    </citation>
    <scope>NUCLEOTIDE SEQUENCE [LARGE SCALE GENOMIC DNA]</scope>
    <source>
        <strain>SN15 / ATCC MYA-4574 / FGSC 10173</strain>
    </source>
</reference>